<proteinExistence type="inferred from homology"/>
<accession>C4JFE4</accession>
<keyword id="KW-0010">Activator</keyword>
<keyword id="KW-0238">DNA-binding</keyword>
<keyword id="KW-0312">Gluconeogenesis</keyword>
<keyword id="KW-0479">Metal-binding</keyword>
<keyword id="KW-0539">Nucleus</keyword>
<keyword id="KW-1185">Reference proteome</keyword>
<keyword id="KW-0804">Transcription</keyword>
<keyword id="KW-0805">Transcription regulation</keyword>
<keyword id="KW-0862">Zinc</keyword>
<name>ACUK_UNCRE</name>
<comment type="function">
    <text evidence="1">Transcription factor which regulates nonfermentable carbon utilization. Activator of gluconeogenetic genes (By similarity).</text>
</comment>
<comment type="subcellular location">
    <subcellularLocation>
        <location evidence="2">Nucleus</location>
    </subcellularLocation>
</comment>
<comment type="similarity">
    <text evidence="4">Belongs to the ERT1/acuK family.</text>
</comment>
<comment type="sequence caution" evidence="4">
    <conflict type="erroneous initiation">
        <sequence resource="EMBL-CDS" id="EEP76109"/>
    </conflict>
    <text>Truncated N-terminus.</text>
</comment>
<evidence type="ECO:0000250" key="1"/>
<evidence type="ECO:0000255" key="2">
    <source>
        <dbReference type="PROSITE-ProRule" id="PRU00227"/>
    </source>
</evidence>
<evidence type="ECO:0000256" key="3">
    <source>
        <dbReference type="SAM" id="MobiDB-lite"/>
    </source>
</evidence>
<evidence type="ECO:0000305" key="4"/>
<organism>
    <name type="scientific">Uncinocarpus reesii (strain UAMH 1704)</name>
    <dbReference type="NCBI Taxonomy" id="336963"/>
    <lineage>
        <taxon>Eukaryota</taxon>
        <taxon>Fungi</taxon>
        <taxon>Dikarya</taxon>
        <taxon>Ascomycota</taxon>
        <taxon>Pezizomycotina</taxon>
        <taxon>Eurotiomycetes</taxon>
        <taxon>Eurotiomycetidae</taxon>
        <taxon>Onygenales</taxon>
        <taxon>Onygenaceae</taxon>
        <taxon>Uncinocarpus</taxon>
    </lineage>
</organism>
<gene>
    <name type="ORF">UREG_00958</name>
</gene>
<feature type="chain" id="PRO_0000406455" description="Transcription activator of gluconeogenesis UREG_00958">
    <location>
        <begin position="1"/>
        <end position="714"/>
    </location>
</feature>
<feature type="DNA-binding region" description="Zn(2)-C6 fungal-type" evidence="2">
    <location>
        <begin position="78"/>
        <end position="106"/>
    </location>
</feature>
<feature type="region of interest" description="Disordered" evidence="3">
    <location>
        <begin position="1"/>
        <end position="71"/>
    </location>
</feature>
<feature type="region of interest" description="Disordered" evidence="3">
    <location>
        <begin position="176"/>
        <end position="228"/>
    </location>
</feature>
<feature type="region of interest" description="Disordered" evidence="3">
    <location>
        <begin position="274"/>
        <end position="312"/>
    </location>
</feature>
<feature type="region of interest" description="Disordered" evidence="3">
    <location>
        <begin position="539"/>
        <end position="567"/>
    </location>
</feature>
<feature type="compositionally biased region" description="Polar residues" evidence="3">
    <location>
        <begin position="38"/>
        <end position="62"/>
    </location>
</feature>
<feature type="compositionally biased region" description="Polar residues" evidence="3">
    <location>
        <begin position="191"/>
        <end position="228"/>
    </location>
</feature>
<feature type="compositionally biased region" description="Low complexity" evidence="3">
    <location>
        <begin position="545"/>
        <end position="555"/>
    </location>
</feature>
<protein>
    <recommendedName>
        <fullName>Transcription activator of gluconeogenesis UREG_00958</fullName>
    </recommendedName>
</protein>
<sequence>MTSNARNGPLPPNPLANSGNNRDISADITMAEQVVRPESQTQVENSSTKQPNGQTKPMSASNAKDPLRPRRKKAKRACFACQRAHLTCGDERPCQRCIKRGIQNSCHDGVRKKAKYLHDAPNEALMPHLQGQLYTQTNAVRNNMSLTSNGSNSKTNFYPRQNSNFNGYYATKNDGSLSQSQLHDAGRPDTFPSQSPVSPTFSITANSATSGNQNMPSSLPASNGNASGQAQNGFGSAFFDPCDPALFNFDLASMNFGNHYGALEFGMLGHMATGAGDTPPSDSATQHGSVGRNGSGTFAPGSNFGESPTAQPSFLFGDPTIAGDWSSSVHTRNIYNQNMNHMSETPHAFAIESGPANFASPNSIESPLLTNSATFDDNTTSAYQNRSSMNPMPPQRQPVVSTPQLKHLQLSKRRQRNPSAIYESVKEPYSYTTGFHSLTAFIQRRFSTQNTLRIAKALASIRPSFIATTKTLNRDDLIFMEKCFQRTLWEYEDFINACGTPTIVCRRTGEIAAVGKEFSILTGWRKEVLLGKEPNLNINTGGSSGSTSGTSSRGSFTPRAGMEVNPSGRTQPVFLAELLDDESVVEFYEDFAKLAFGDSRGSVMTTCKLLKYKTKADTDMLPGNTGGTGGGDGQSAASGNGHVKVENGMAASNGQAQPLSQPQRRWSRGGIAGEAGMNQLGFKDGKVECSYCWTVKRDVFDIPMLIVMNFLPCI</sequence>
<reference key="1">
    <citation type="journal article" date="2009" name="Genome Res.">
        <title>Comparative genomic analyses of the human fungal pathogens Coccidioides and their relatives.</title>
        <authorList>
            <person name="Sharpton T.J."/>
            <person name="Stajich J.E."/>
            <person name="Rounsley S.D."/>
            <person name="Gardner M.J."/>
            <person name="Wortman J.R."/>
            <person name="Jordar V.S."/>
            <person name="Maiti R."/>
            <person name="Kodira C.D."/>
            <person name="Neafsey D.E."/>
            <person name="Zeng Q."/>
            <person name="Hung C.-Y."/>
            <person name="McMahan C."/>
            <person name="Muszewska A."/>
            <person name="Grynberg M."/>
            <person name="Mandel M.A."/>
            <person name="Kellner E.M."/>
            <person name="Barker B.M."/>
            <person name="Galgiani J.N."/>
            <person name="Orbach M.J."/>
            <person name="Kirkland T.N."/>
            <person name="Cole G.T."/>
            <person name="Henn M.R."/>
            <person name="Birren B.W."/>
            <person name="Taylor J.W."/>
        </authorList>
    </citation>
    <scope>NUCLEOTIDE SEQUENCE [LARGE SCALE GENOMIC DNA]</scope>
    <source>
        <strain>UAMH 1704</strain>
    </source>
</reference>
<dbReference type="EMBL" id="CH476615">
    <property type="protein sequence ID" value="EEP76109.1"/>
    <property type="status" value="ALT_INIT"/>
    <property type="molecule type" value="Genomic_DNA"/>
</dbReference>
<dbReference type="RefSeq" id="XP_002541442.1">
    <property type="nucleotide sequence ID" value="XM_002541396.1"/>
</dbReference>
<dbReference type="SMR" id="C4JFE4"/>
<dbReference type="FunCoup" id="C4JFE4">
    <property type="interactions" value="180"/>
</dbReference>
<dbReference type="GeneID" id="8441777"/>
<dbReference type="KEGG" id="ure:UREG_00958"/>
<dbReference type="VEuPathDB" id="FungiDB:UREG_00958"/>
<dbReference type="eggNOG" id="ENOG502R1M5">
    <property type="taxonomic scope" value="Eukaryota"/>
</dbReference>
<dbReference type="HOGENOM" id="CLU_010748_1_0_1"/>
<dbReference type="InParanoid" id="C4JFE4"/>
<dbReference type="OrthoDB" id="2538135at2759"/>
<dbReference type="Proteomes" id="UP000002058">
    <property type="component" value="Unassembled WGS sequence"/>
</dbReference>
<dbReference type="GO" id="GO:0005634">
    <property type="term" value="C:nucleus"/>
    <property type="evidence" value="ECO:0007669"/>
    <property type="project" value="UniProtKB-SubCell"/>
</dbReference>
<dbReference type="GO" id="GO:0000981">
    <property type="term" value="F:DNA-binding transcription factor activity, RNA polymerase II-specific"/>
    <property type="evidence" value="ECO:0007669"/>
    <property type="project" value="InterPro"/>
</dbReference>
<dbReference type="GO" id="GO:0000977">
    <property type="term" value="F:RNA polymerase II transcription regulatory region sequence-specific DNA binding"/>
    <property type="evidence" value="ECO:0007669"/>
    <property type="project" value="TreeGrafter"/>
</dbReference>
<dbReference type="GO" id="GO:0008270">
    <property type="term" value="F:zinc ion binding"/>
    <property type="evidence" value="ECO:0007669"/>
    <property type="project" value="InterPro"/>
</dbReference>
<dbReference type="GO" id="GO:0009267">
    <property type="term" value="P:cellular response to starvation"/>
    <property type="evidence" value="ECO:0007669"/>
    <property type="project" value="TreeGrafter"/>
</dbReference>
<dbReference type="GO" id="GO:0006094">
    <property type="term" value="P:gluconeogenesis"/>
    <property type="evidence" value="ECO:0007669"/>
    <property type="project" value="UniProtKB-KW"/>
</dbReference>
<dbReference type="CDD" id="cd00067">
    <property type="entry name" value="GAL4"/>
    <property type="match status" value="1"/>
</dbReference>
<dbReference type="Gene3D" id="4.10.240.10">
    <property type="entry name" value="Zn(2)-C6 fungal-type DNA-binding domain"/>
    <property type="match status" value="1"/>
</dbReference>
<dbReference type="InterPro" id="IPR050335">
    <property type="entry name" value="ERT1_acuK_gluconeogen_tf"/>
</dbReference>
<dbReference type="InterPro" id="IPR056751">
    <property type="entry name" value="PAS_13"/>
</dbReference>
<dbReference type="InterPro" id="IPR036864">
    <property type="entry name" value="Zn2-C6_fun-type_DNA-bd_sf"/>
</dbReference>
<dbReference type="InterPro" id="IPR001138">
    <property type="entry name" value="Zn2Cys6_DnaBD"/>
</dbReference>
<dbReference type="PANTHER" id="PTHR47659:SF1">
    <property type="entry name" value="TRANSCRIPTION ACTIVATOR OF GLUCONEOGENESIS ERT1"/>
    <property type="match status" value="1"/>
</dbReference>
<dbReference type="PANTHER" id="PTHR47659">
    <property type="entry name" value="ZN(II)2CYS6 TRANSCRIPTION FACTOR (EUROFUNG)-RELATED"/>
    <property type="match status" value="1"/>
</dbReference>
<dbReference type="Pfam" id="PF24990">
    <property type="entry name" value="PAS_13"/>
    <property type="match status" value="1"/>
</dbReference>
<dbReference type="SMART" id="SM00066">
    <property type="entry name" value="GAL4"/>
    <property type="match status" value="1"/>
</dbReference>
<dbReference type="SUPFAM" id="SSF57701">
    <property type="entry name" value="Zn2/Cys6 DNA-binding domain"/>
    <property type="match status" value="1"/>
</dbReference>
<dbReference type="PROSITE" id="PS50048">
    <property type="entry name" value="ZN2_CY6_FUNGAL_2"/>
    <property type="match status" value="1"/>
</dbReference>